<protein>
    <recommendedName>
        <fullName>Pentatricopeptide repeat-containing protein At4g08210</fullName>
    </recommendedName>
</protein>
<comment type="similarity">
    <text evidence="1">Belongs to the PPR family. PCMP-E subfamily.</text>
</comment>
<comment type="online information" name="Pentatricopeptide repeat proteins">
    <link uri="https://ppr.plantenergy.uwa.edu.au"/>
</comment>
<organism>
    <name type="scientific">Arabidopsis thaliana</name>
    <name type="common">Mouse-ear cress</name>
    <dbReference type="NCBI Taxonomy" id="3702"/>
    <lineage>
        <taxon>Eukaryota</taxon>
        <taxon>Viridiplantae</taxon>
        <taxon>Streptophyta</taxon>
        <taxon>Embryophyta</taxon>
        <taxon>Tracheophyta</taxon>
        <taxon>Spermatophyta</taxon>
        <taxon>Magnoliopsida</taxon>
        <taxon>eudicotyledons</taxon>
        <taxon>Gunneridae</taxon>
        <taxon>Pentapetalae</taxon>
        <taxon>rosids</taxon>
        <taxon>malvids</taxon>
        <taxon>Brassicales</taxon>
        <taxon>Brassicaceae</taxon>
        <taxon>Camelineae</taxon>
        <taxon>Arabidopsis</taxon>
    </lineage>
</organism>
<evidence type="ECO:0000305" key="1"/>
<dbReference type="EMBL" id="AL080252">
    <property type="protein sequence ID" value="CAB45791.1"/>
    <property type="molecule type" value="Genomic_DNA"/>
</dbReference>
<dbReference type="EMBL" id="AL161510">
    <property type="protein sequence ID" value="CAB81157.1"/>
    <property type="molecule type" value="Genomic_DNA"/>
</dbReference>
<dbReference type="EMBL" id="CP002687">
    <property type="protein sequence ID" value="AEE82609.1"/>
    <property type="molecule type" value="Genomic_DNA"/>
</dbReference>
<dbReference type="PIR" id="T10548">
    <property type="entry name" value="T10548"/>
</dbReference>
<dbReference type="RefSeq" id="NP_192561.1">
    <property type="nucleotide sequence ID" value="NM_116890.2"/>
</dbReference>
<dbReference type="SMR" id="Q9SUF9"/>
<dbReference type="FunCoup" id="Q9SUF9">
    <property type="interactions" value="76"/>
</dbReference>
<dbReference type="STRING" id="3702.Q9SUF9"/>
<dbReference type="PaxDb" id="3702-AT4G08210.1"/>
<dbReference type="ProteomicsDB" id="249216"/>
<dbReference type="EnsemblPlants" id="AT4G08210.1">
    <property type="protein sequence ID" value="AT4G08210.1"/>
    <property type="gene ID" value="AT4G08210"/>
</dbReference>
<dbReference type="GeneID" id="826371"/>
<dbReference type="Gramene" id="AT4G08210.1">
    <property type="protein sequence ID" value="AT4G08210.1"/>
    <property type="gene ID" value="AT4G08210"/>
</dbReference>
<dbReference type="KEGG" id="ath:AT4G08210"/>
<dbReference type="Araport" id="AT4G08210"/>
<dbReference type="TAIR" id="AT4G08210"/>
<dbReference type="eggNOG" id="KOG4197">
    <property type="taxonomic scope" value="Eukaryota"/>
</dbReference>
<dbReference type="HOGENOM" id="CLU_002706_15_1_1"/>
<dbReference type="InParanoid" id="Q9SUF9"/>
<dbReference type="OMA" id="PEHYNCM"/>
<dbReference type="PhylomeDB" id="Q9SUF9"/>
<dbReference type="PRO" id="PR:Q9SUF9"/>
<dbReference type="Proteomes" id="UP000006548">
    <property type="component" value="Chromosome 4"/>
</dbReference>
<dbReference type="ExpressionAtlas" id="Q9SUF9">
    <property type="expression patterns" value="baseline and differential"/>
</dbReference>
<dbReference type="GO" id="GO:0003723">
    <property type="term" value="F:RNA binding"/>
    <property type="evidence" value="ECO:0007669"/>
    <property type="project" value="InterPro"/>
</dbReference>
<dbReference type="GO" id="GO:0009451">
    <property type="term" value="P:RNA modification"/>
    <property type="evidence" value="ECO:0007669"/>
    <property type="project" value="InterPro"/>
</dbReference>
<dbReference type="FunFam" id="1.25.40.10:FF:001587">
    <property type="entry name" value="Pentatricopeptide repeat-containing protein At2g04860"/>
    <property type="match status" value="1"/>
</dbReference>
<dbReference type="FunFam" id="1.25.40.10:FF:001779">
    <property type="entry name" value="Pentatricopeptide repeat-containing protein At4g08210"/>
    <property type="match status" value="1"/>
</dbReference>
<dbReference type="FunFam" id="1.25.40.10:FF:002091">
    <property type="entry name" value="Pentatricopeptide repeat-containing protein At4g08210"/>
    <property type="match status" value="1"/>
</dbReference>
<dbReference type="FunFam" id="1.25.40.10:FF:000243">
    <property type="entry name" value="Pentatricopeptide repeat-containing protein chloroplastic"/>
    <property type="match status" value="1"/>
</dbReference>
<dbReference type="FunFam" id="1.25.40.10:FF:000285">
    <property type="entry name" value="Pentatricopeptide repeat-containing protein, chloroplastic"/>
    <property type="match status" value="1"/>
</dbReference>
<dbReference type="Gene3D" id="1.25.40.10">
    <property type="entry name" value="Tetratricopeptide repeat domain"/>
    <property type="match status" value="6"/>
</dbReference>
<dbReference type="InterPro" id="IPR002885">
    <property type="entry name" value="Pentatricopeptide_rpt"/>
</dbReference>
<dbReference type="InterPro" id="IPR046960">
    <property type="entry name" value="PPR_At4g14850-like_plant"/>
</dbReference>
<dbReference type="InterPro" id="IPR011990">
    <property type="entry name" value="TPR-like_helical_dom_sf"/>
</dbReference>
<dbReference type="NCBIfam" id="TIGR00756">
    <property type="entry name" value="PPR"/>
    <property type="match status" value="3"/>
</dbReference>
<dbReference type="PANTHER" id="PTHR47926:SF533">
    <property type="entry name" value="DYW DOMAIN-CONTAINING PROTEIN"/>
    <property type="match status" value="1"/>
</dbReference>
<dbReference type="PANTHER" id="PTHR47926">
    <property type="entry name" value="PENTATRICOPEPTIDE REPEAT-CONTAINING PROTEIN"/>
    <property type="match status" value="1"/>
</dbReference>
<dbReference type="Pfam" id="PF01535">
    <property type="entry name" value="PPR"/>
    <property type="match status" value="6"/>
</dbReference>
<dbReference type="Pfam" id="PF12854">
    <property type="entry name" value="PPR_1"/>
    <property type="match status" value="1"/>
</dbReference>
<dbReference type="Pfam" id="PF13041">
    <property type="entry name" value="PPR_2"/>
    <property type="match status" value="1"/>
</dbReference>
<dbReference type="SUPFAM" id="SSF48452">
    <property type="entry name" value="TPR-like"/>
    <property type="match status" value="1"/>
</dbReference>
<dbReference type="PROSITE" id="PS51375">
    <property type="entry name" value="PPR"/>
    <property type="match status" value="14"/>
</dbReference>
<keyword id="KW-1185">Reference proteome</keyword>
<keyword id="KW-0677">Repeat</keyword>
<proteinExistence type="inferred from homology"/>
<gene>
    <name type="primary">PCMP-E100</name>
    <name type="ordered locus">At4g08210</name>
    <name type="ORF">T12G13.50</name>
</gene>
<name>PP305_ARATH</name>
<feature type="chain" id="PRO_0000363423" description="Pentatricopeptide repeat-containing protein At4g08210">
    <location>
        <begin position="1"/>
        <end position="686"/>
    </location>
</feature>
<feature type="repeat" description="PPR 1">
    <location>
        <begin position="4"/>
        <end position="38"/>
    </location>
</feature>
<feature type="repeat" description="PPR 2">
    <location>
        <begin position="39"/>
        <end position="69"/>
    </location>
</feature>
<feature type="repeat" description="PPR 3">
    <location>
        <begin position="70"/>
        <end position="104"/>
    </location>
</feature>
<feature type="repeat" description="PPR 4">
    <location>
        <begin position="106"/>
        <end position="140"/>
    </location>
</feature>
<feature type="repeat" description="PPR 5">
    <location>
        <begin position="141"/>
        <end position="171"/>
    </location>
</feature>
<feature type="repeat" description="PPR 6">
    <location>
        <begin position="172"/>
        <end position="206"/>
    </location>
</feature>
<feature type="repeat" description="PPR 7">
    <location>
        <begin position="207"/>
        <end position="236"/>
    </location>
</feature>
<feature type="repeat" description="PPR 8">
    <location>
        <begin position="237"/>
        <end position="271"/>
    </location>
</feature>
<feature type="repeat" description="PPR 9">
    <location>
        <begin position="272"/>
        <end position="302"/>
    </location>
</feature>
<feature type="repeat" description="PPR 10">
    <location>
        <begin position="306"/>
        <end position="340"/>
    </location>
</feature>
<feature type="repeat" description="PPR 11">
    <location>
        <begin position="341"/>
        <end position="375"/>
    </location>
</feature>
<feature type="repeat" description="PPR 12">
    <location>
        <begin position="376"/>
        <end position="406"/>
    </location>
</feature>
<feature type="repeat" description="PPR 13">
    <location>
        <begin position="407"/>
        <end position="441"/>
    </location>
</feature>
<feature type="repeat" description="PPR 14">
    <location>
        <begin position="442"/>
        <end position="476"/>
    </location>
</feature>
<feature type="repeat" description="PPR 15">
    <location>
        <begin position="477"/>
        <end position="507"/>
    </location>
</feature>
<feature type="repeat" description="PPR 16">
    <location>
        <begin position="508"/>
        <end position="542"/>
    </location>
</feature>
<feature type="repeat" description="PPR 17">
    <location>
        <begin position="543"/>
        <end position="573"/>
    </location>
</feature>
<feature type="repeat" description="PPR 18">
    <location>
        <begin position="579"/>
        <end position="609"/>
    </location>
</feature>
<feature type="region of interest" description="Type E motif; degenerate">
    <location>
        <begin position="614"/>
        <end position="686"/>
    </location>
</feature>
<reference key="1">
    <citation type="journal article" date="1999" name="Nature">
        <title>Sequence and analysis of chromosome 4 of the plant Arabidopsis thaliana.</title>
        <authorList>
            <person name="Mayer K.F.X."/>
            <person name="Schueller C."/>
            <person name="Wambutt R."/>
            <person name="Murphy G."/>
            <person name="Volckaert G."/>
            <person name="Pohl T."/>
            <person name="Duesterhoeft A."/>
            <person name="Stiekema W."/>
            <person name="Entian K.-D."/>
            <person name="Terryn N."/>
            <person name="Harris B."/>
            <person name="Ansorge W."/>
            <person name="Brandt P."/>
            <person name="Grivell L.A."/>
            <person name="Rieger M."/>
            <person name="Weichselgartner M."/>
            <person name="de Simone V."/>
            <person name="Obermaier B."/>
            <person name="Mache R."/>
            <person name="Mueller M."/>
            <person name="Kreis M."/>
            <person name="Delseny M."/>
            <person name="Puigdomenech P."/>
            <person name="Watson M."/>
            <person name="Schmidtheini T."/>
            <person name="Reichert B."/>
            <person name="Portetelle D."/>
            <person name="Perez-Alonso M."/>
            <person name="Boutry M."/>
            <person name="Bancroft I."/>
            <person name="Vos P."/>
            <person name="Hoheisel J."/>
            <person name="Zimmermann W."/>
            <person name="Wedler H."/>
            <person name="Ridley P."/>
            <person name="Langham S.-A."/>
            <person name="McCullagh B."/>
            <person name="Bilham L."/>
            <person name="Robben J."/>
            <person name="van der Schueren J."/>
            <person name="Grymonprez B."/>
            <person name="Chuang Y.-J."/>
            <person name="Vandenbussche F."/>
            <person name="Braeken M."/>
            <person name="Weltjens I."/>
            <person name="Voet M."/>
            <person name="Bastiaens I."/>
            <person name="Aert R."/>
            <person name="Defoor E."/>
            <person name="Weitzenegger T."/>
            <person name="Bothe G."/>
            <person name="Ramsperger U."/>
            <person name="Hilbert H."/>
            <person name="Braun M."/>
            <person name="Holzer E."/>
            <person name="Brandt A."/>
            <person name="Peters S."/>
            <person name="van Staveren M."/>
            <person name="Dirkse W."/>
            <person name="Mooijman P."/>
            <person name="Klein Lankhorst R."/>
            <person name="Rose M."/>
            <person name="Hauf J."/>
            <person name="Koetter P."/>
            <person name="Berneiser S."/>
            <person name="Hempel S."/>
            <person name="Feldpausch M."/>
            <person name="Lamberth S."/>
            <person name="Van den Daele H."/>
            <person name="De Keyser A."/>
            <person name="Buysshaert C."/>
            <person name="Gielen J."/>
            <person name="Villarroel R."/>
            <person name="De Clercq R."/>
            <person name="van Montagu M."/>
            <person name="Rogers J."/>
            <person name="Cronin A."/>
            <person name="Quail M.A."/>
            <person name="Bray-Allen S."/>
            <person name="Clark L."/>
            <person name="Doggett J."/>
            <person name="Hall S."/>
            <person name="Kay M."/>
            <person name="Lennard N."/>
            <person name="McLay K."/>
            <person name="Mayes R."/>
            <person name="Pettett A."/>
            <person name="Rajandream M.A."/>
            <person name="Lyne M."/>
            <person name="Benes V."/>
            <person name="Rechmann S."/>
            <person name="Borkova D."/>
            <person name="Bloecker H."/>
            <person name="Scharfe M."/>
            <person name="Grimm M."/>
            <person name="Loehnert T.-H."/>
            <person name="Dose S."/>
            <person name="de Haan M."/>
            <person name="Maarse A.C."/>
            <person name="Schaefer M."/>
            <person name="Mueller-Auer S."/>
            <person name="Gabel C."/>
            <person name="Fuchs M."/>
            <person name="Fartmann B."/>
            <person name="Granderath K."/>
            <person name="Dauner D."/>
            <person name="Herzl A."/>
            <person name="Neumann S."/>
            <person name="Argiriou A."/>
            <person name="Vitale D."/>
            <person name="Liguori R."/>
            <person name="Piravandi E."/>
            <person name="Massenet O."/>
            <person name="Quigley F."/>
            <person name="Clabauld G."/>
            <person name="Muendlein A."/>
            <person name="Felber R."/>
            <person name="Schnabl S."/>
            <person name="Hiller R."/>
            <person name="Schmidt W."/>
            <person name="Lecharny A."/>
            <person name="Aubourg S."/>
            <person name="Chefdor F."/>
            <person name="Cooke R."/>
            <person name="Berger C."/>
            <person name="Monfort A."/>
            <person name="Casacuberta E."/>
            <person name="Gibbons T."/>
            <person name="Weber N."/>
            <person name="Vandenbol M."/>
            <person name="Bargues M."/>
            <person name="Terol J."/>
            <person name="Torres A."/>
            <person name="Perez-Perez A."/>
            <person name="Purnelle B."/>
            <person name="Bent E."/>
            <person name="Johnson S."/>
            <person name="Tacon D."/>
            <person name="Jesse T."/>
            <person name="Heijnen L."/>
            <person name="Schwarz S."/>
            <person name="Scholler P."/>
            <person name="Heber S."/>
            <person name="Francs P."/>
            <person name="Bielke C."/>
            <person name="Frishman D."/>
            <person name="Haase D."/>
            <person name="Lemcke K."/>
            <person name="Mewes H.-W."/>
            <person name="Stocker S."/>
            <person name="Zaccaria P."/>
            <person name="Bevan M."/>
            <person name="Wilson R.K."/>
            <person name="de la Bastide M."/>
            <person name="Habermann K."/>
            <person name="Parnell L."/>
            <person name="Dedhia N."/>
            <person name="Gnoj L."/>
            <person name="Schutz K."/>
            <person name="Huang E."/>
            <person name="Spiegel L."/>
            <person name="Sekhon M."/>
            <person name="Murray J."/>
            <person name="Sheet P."/>
            <person name="Cordes M."/>
            <person name="Abu-Threideh J."/>
            <person name="Stoneking T."/>
            <person name="Kalicki J."/>
            <person name="Graves T."/>
            <person name="Harmon G."/>
            <person name="Edwards J."/>
            <person name="Latreille P."/>
            <person name="Courtney L."/>
            <person name="Cloud J."/>
            <person name="Abbott A."/>
            <person name="Scott K."/>
            <person name="Johnson D."/>
            <person name="Minx P."/>
            <person name="Bentley D."/>
            <person name="Fulton B."/>
            <person name="Miller N."/>
            <person name="Greco T."/>
            <person name="Kemp K."/>
            <person name="Kramer J."/>
            <person name="Fulton L."/>
            <person name="Mardis E."/>
            <person name="Dante M."/>
            <person name="Pepin K."/>
            <person name="Hillier L.W."/>
            <person name="Nelson J."/>
            <person name="Spieth J."/>
            <person name="Ryan E."/>
            <person name="Andrews S."/>
            <person name="Geisel C."/>
            <person name="Layman D."/>
            <person name="Du H."/>
            <person name="Ali J."/>
            <person name="Berghoff A."/>
            <person name="Jones K."/>
            <person name="Drone K."/>
            <person name="Cotton M."/>
            <person name="Joshu C."/>
            <person name="Antonoiu B."/>
            <person name="Zidanic M."/>
            <person name="Strong C."/>
            <person name="Sun H."/>
            <person name="Lamar B."/>
            <person name="Yordan C."/>
            <person name="Ma P."/>
            <person name="Zhong J."/>
            <person name="Preston R."/>
            <person name="Vil D."/>
            <person name="Shekher M."/>
            <person name="Matero A."/>
            <person name="Shah R."/>
            <person name="Swaby I.K."/>
            <person name="O'Shaughnessy A."/>
            <person name="Rodriguez M."/>
            <person name="Hoffman J."/>
            <person name="Till S."/>
            <person name="Granat S."/>
            <person name="Shohdy N."/>
            <person name="Hasegawa A."/>
            <person name="Hameed A."/>
            <person name="Lodhi M."/>
            <person name="Johnson A."/>
            <person name="Chen E."/>
            <person name="Marra M.A."/>
            <person name="Martienssen R."/>
            <person name="McCombie W.R."/>
        </authorList>
    </citation>
    <scope>NUCLEOTIDE SEQUENCE [LARGE SCALE GENOMIC DNA]</scope>
    <source>
        <strain>cv. Columbia</strain>
    </source>
</reference>
<reference key="2">
    <citation type="journal article" date="2017" name="Plant J.">
        <title>Araport11: a complete reannotation of the Arabidopsis thaliana reference genome.</title>
        <authorList>
            <person name="Cheng C.Y."/>
            <person name="Krishnakumar V."/>
            <person name="Chan A.P."/>
            <person name="Thibaud-Nissen F."/>
            <person name="Schobel S."/>
            <person name="Town C.D."/>
        </authorList>
    </citation>
    <scope>GENOME REANNOTATION</scope>
    <source>
        <strain>cv. Columbia</strain>
    </source>
</reference>
<reference key="3">
    <citation type="journal article" date="2004" name="Plant Cell">
        <title>Genome-wide analysis of Arabidopsis pentatricopeptide repeat proteins reveals their essential role in organelle biogenesis.</title>
        <authorList>
            <person name="Lurin C."/>
            <person name="Andres C."/>
            <person name="Aubourg S."/>
            <person name="Bellaoui M."/>
            <person name="Bitton F."/>
            <person name="Bruyere C."/>
            <person name="Caboche M."/>
            <person name="Debast C."/>
            <person name="Gualberto J."/>
            <person name="Hoffmann B."/>
            <person name="Lecharny A."/>
            <person name="Le Ret M."/>
            <person name="Martin-Magniette M.-L."/>
            <person name="Mireau H."/>
            <person name="Peeters N."/>
            <person name="Renou J.-P."/>
            <person name="Szurek B."/>
            <person name="Taconnat L."/>
            <person name="Small I."/>
        </authorList>
    </citation>
    <scope>GENE FAMILY</scope>
</reference>
<sequence length="686" mass="75825">MVMDLKLIAAGLRHCGKVQAFKRGESIQAHVIKQGISQNVFIANNVISMYVDFRLLSDAHKVFDEMSERNIVTWTTMVSGYTSDGKPNKAIELYRRMLDSEEEAANEFMYSAVLKACGLVGDIQLGILVYERIGKENLRGDVVLMNSVVDMYVKNGRLIEANSSFKEILRPSSTSWNTLISGYCKAGLMDEAVTLFHRMPQPNVVSWNCLISGFVDKGSPRALEFLVRMQREGLVLDGFALPCGLKACSFGGLLTMGKQLHCCVVKSGLESSPFAISALIDMYSNCGSLIYAADVFHQEKLAVNSSVAVWNSMLSGFLINEENEAALWLLLQIYQSDLCFDSYTLSGALKICINYVNLRLGLQVHSLVVVSGYELDYIVGSILVDLHANVGNIQDAHKLFHRLPNKDIIAFSGLIRGCVKSGFNSLAFYLFRELIKLGLDADQFIVSNILKVCSSLASLGWGKQIHGLCIKKGYESEPVTATALVDMYVKCGEIDNGVVLFDGMLERDVVSWTGIIVGFGQNGRVEEAFRYFHKMINIGIEPNKVTFLGLLSACRHSGLLEEARSTLETMKSEYGLEPYLEHYYCVVDLLGQAGLFQEANELINKMPLEPDKTIWTSLLTACGTHKNAGLVTVIAEKLLKGFPDDPSVYTSLSNAYATLGMWDQLSKVREAAKKLGAKESGMSWII</sequence>
<accession>Q9SUF9</accession>